<organism>
    <name type="scientific">Lactococcus lactis subsp. cremoris (strain MG1363)</name>
    <dbReference type="NCBI Taxonomy" id="416870"/>
    <lineage>
        <taxon>Bacteria</taxon>
        <taxon>Bacillati</taxon>
        <taxon>Bacillota</taxon>
        <taxon>Bacilli</taxon>
        <taxon>Lactobacillales</taxon>
        <taxon>Streptococcaceae</taxon>
        <taxon>Lactococcus</taxon>
        <taxon>Lactococcus cremoris subsp. cremoris</taxon>
    </lineage>
</organism>
<evidence type="ECO:0000255" key="1">
    <source>
        <dbReference type="HAMAP-Rule" id="MF_01235"/>
    </source>
</evidence>
<name>NANE_LACLM</name>
<reference key="1">
    <citation type="journal article" date="2007" name="J. Bacteriol.">
        <title>The complete genome sequence of the lactic acid bacterial paradigm Lactococcus lactis subsp. cremoris MG1363.</title>
        <authorList>
            <person name="Wegmann U."/>
            <person name="O'Connell-Motherway M."/>
            <person name="Zomer A."/>
            <person name="Buist G."/>
            <person name="Shearman C."/>
            <person name="Canchaya C."/>
            <person name="Ventura M."/>
            <person name="Goesmann A."/>
            <person name="Gasson M.J."/>
            <person name="Kuipers O.P."/>
            <person name="van Sinderen D."/>
            <person name="Kok J."/>
        </authorList>
    </citation>
    <scope>NUCLEOTIDE SEQUENCE [LARGE SCALE GENOMIC DNA]</scope>
    <source>
        <strain>MG1363</strain>
    </source>
</reference>
<sequence>MNKEQFLEKIKGGIIVSCQALPGEPLYSENGGVMPLMAKAAEQAGAVAIRANSVRDIKEIQKAVSLPIIGIIKKDYLPQKPFITATMKEIDELVATSCEVIALDCTLRERHDGLTINQFIKKIKEKYPTQILMADCSNFKECENAYSAGVDFVGTTLSGYTEESKKQDGPDFELLEKLVEAKIPVIAEGRIHSPEQAQYVQKIGVDGMVIGGAITRPLEIASRFVQAVESVEKL</sequence>
<proteinExistence type="inferred from homology"/>
<feature type="chain" id="PRO_0000301475" description="Putative N-acetylmannosamine-6-phosphate 2-epimerase">
    <location>
        <begin position="1"/>
        <end position="234"/>
    </location>
</feature>
<keyword id="KW-0119">Carbohydrate metabolism</keyword>
<keyword id="KW-0413">Isomerase</keyword>
<dbReference type="EC" id="5.1.3.9" evidence="1"/>
<dbReference type="EMBL" id="AM406671">
    <property type="protein sequence ID" value="CAL97908.1"/>
    <property type="molecule type" value="Genomic_DNA"/>
</dbReference>
<dbReference type="RefSeq" id="WP_011835192.1">
    <property type="nucleotide sequence ID" value="NC_009004.1"/>
</dbReference>
<dbReference type="SMR" id="A2RKU2"/>
<dbReference type="STRING" id="416870.llmg_1317"/>
<dbReference type="KEGG" id="llm:llmg_1317"/>
<dbReference type="eggNOG" id="COG3010">
    <property type="taxonomic scope" value="Bacteria"/>
</dbReference>
<dbReference type="HOGENOM" id="CLU_086300_1_0_9"/>
<dbReference type="OrthoDB" id="9781704at2"/>
<dbReference type="PhylomeDB" id="A2RKU2"/>
<dbReference type="UniPathway" id="UPA00629">
    <property type="reaction ID" value="UER00682"/>
</dbReference>
<dbReference type="Proteomes" id="UP000000364">
    <property type="component" value="Chromosome"/>
</dbReference>
<dbReference type="GO" id="GO:0005829">
    <property type="term" value="C:cytosol"/>
    <property type="evidence" value="ECO:0007669"/>
    <property type="project" value="TreeGrafter"/>
</dbReference>
<dbReference type="GO" id="GO:0047465">
    <property type="term" value="F:N-acylglucosamine-6-phosphate 2-epimerase activity"/>
    <property type="evidence" value="ECO:0007669"/>
    <property type="project" value="UniProtKB-EC"/>
</dbReference>
<dbReference type="GO" id="GO:0005975">
    <property type="term" value="P:carbohydrate metabolic process"/>
    <property type="evidence" value="ECO:0007669"/>
    <property type="project" value="UniProtKB-UniRule"/>
</dbReference>
<dbReference type="GO" id="GO:0006053">
    <property type="term" value="P:N-acetylmannosamine catabolic process"/>
    <property type="evidence" value="ECO:0007669"/>
    <property type="project" value="TreeGrafter"/>
</dbReference>
<dbReference type="GO" id="GO:0019262">
    <property type="term" value="P:N-acetylneuraminate catabolic process"/>
    <property type="evidence" value="ECO:0007669"/>
    <property type="project" value="UniProtKB-UniRule"/>
</dbReference>
<dbReference type="CDD" id="cd04729">
    <property type="entry name" value="NanE"/>
    <property type="match status" value="1"/>
</dbReference>
<dbReference type="FunFam" id="3.20.20.70:FF:000035">
    <property type="entry name" value="Putative N-acetylmannosamine-6-phosphate 2-epimerase"/>
    <property type="match status" value="1"/>
</dbReference>
<dbReference type="Gene3D" id="3.20.20.70">
    <property type="entry name" value="Aldolase class I"/>
    <property type="match status" value="1"/>
</dbReference>
<dbReference type="HAMAP" id="MF_01235">
    <property type="entry name" value="ManNAc6P_epimer"/>
    <property type="match status" value="1"/>
</dbReference>
<dbReference type="InterPro" id="IPR013785">
    <property type="entry name" value="Aldolase_TIM"/>
</dbReference>
<dbReference type="InterPro" id="IPR007260">
    <property type="entry name" value="NanE"/>
</dbReference>
<dbReference type="InterPro" id="IPR011060">
    <property type="entry name" value="RibuloseP-bd_barrel"/>
</dbReference>
<dbReference type="NCBIfam" id="NF002231">
    <property type="entry name" value="PRK01130.1"/>
    <property type="match status" value="1"/>
</dbReference>
<dbReference type="PANTHER" id="PTHR36204">
    <property type="entry name" value="N-ACETYLMANNOSAMINE-6-PHOSPHATE 2-EPIMERASE-RELATED"/>
    <property type="match status" value="1"/>
</dbReference>
<dbReference type="PANTHER" id="PTHR36204:SF1">
    <property type="entry name" value="N-ACETYLMANNOSAMINE-6-PHOSPHATE 2-EPIMERASE-RELATED"/>
    <property type="match status" value="1"/>
</dbReference>
<dbReference type="Pfam" id="PF04131">
    <property type="entry name" value="NanE"/>
    <property type="match status" value="1"/>
</dbReference>
<dbReference type="SUPFAM" id="SSF51366">
    <property type="entry name" value="Ribulose-phoshate binding barrel"/>
    <property type="match status" value="1"/>
</dbReference>
<accession>A2RKU2</accession>
<comment type="function">
    <text evidence="1">Converts N-acetylmannosamine-6-phosphate (ManNAc-6-P) to N-acetylglucosamine-6-phosphate (GlcNAc-6-P).</text>
</comment>
<comment type="catalytic activity">
    <reaction evidence="1">
        <text>an N-acyl-D-glucosamine 6-phosphate = an N-acyl-D-mannosamine 6-phosphate</text>
        <dbReference type="Rhea" id="RHEA:23932"/>
        <dbReference type="ChEBI" id="CHEBI:57599"/>
        <dbReference type="ChEBI" id="CHEBI:57666"/>
        <dbReference type="EC" id="5.1.3.9"/>
    </reaction>
</comment>
<comment type="pathway">
    <text evidence="1">Amino-sugar metabolism; N-acetylneuraminate degradation; D-fructose 6-phosphate from N-acetylneuraminate: step 3/5.</text>
</comment>
<comment type="similarity">
    <text evidence="1">Belongs to the NanE family.</text>
</comment>
<protein>
    <recommendedName>
        <fullName evidence="1">Putative N-acetylmannosamine-6-phosphate 2-epimerase</fullName>
        <ecNumber evidence="1">5.1.3.9</ecNumber>
    </recommendedName>
    <alternativeName>
        <fullName evidence="1">ManNAc-6-P epimerase</fullName>
    </alternativeName>
</protein>
<gene>
    <name evidence="1" type="primary">nanE</name>
    <name type="ordered locus">llmg_1317</name>
</gene>